<comment type="tissue specificity">
    <text evidence="2">Specifically expressed in testis (at protein level).</text>
</comment>
<keyword id="KW-1185">Reference proteome</keyword>
<feature type="chain" id="PRO_0000436225" description="Putative protein T-ENOL">
    <location>
        <begin position="1"/>
        <end position="89"/>
    </location>
</feature>
<feature type="region of interest" description="Disordered" evidence="1">
    <location>
        <begin position="1"/>
        <end position="31"/>
    </location>
</feature>
<feature type="region of interest" description="Disordered" evidence="1">
    <location>
        <begin position="54"/>
        <end position="89"/>
    </location>
</feature>
<reference key="1">
    <citation type="journal article" date="2004" name="Nature">
        <title>Genome sequence of the Brown Norway rat yields insights into mammalian evolution.</title>
        <authorList>
            <person name="Gibbs R.A."/>
            <person name="Weinstock G.M."/>
            <person name="Metzker M.L."/>
            <person name="Muzny D.M."/>
            <person name="Sodergren E.J."/>
            <person name="Scherer S."/>
            <person name="Scott G."/>
            <person name="Steffen D."/>
            <person name="Worley K.C."/>
            <person name="Burch P.E."/>
            <person name="Okwuonu G."/>
            <person name="Hines S."/>
            <person name="Lewis L."/>
            <person name="Deramo C."/>
            <person name="Delgado O."/>
            <person name="Dugan-Rocha S."/>
            <person name="Miner G."/>
            <person name="Morgan M."/>
            <person name="Hawes A."/>
            <person name="Gill R."/>
            <person name="Holt R.A."/>
            <person name="Adams M.D."/>
            <person name="Amanatides P.G."/>
            <person name="Baden-Tillson H."/>
            <person name="Barnstead M."/>
            <person name="Chin S."/>
            <person name="Evans C.A."/>
            <person name="Ferriera S."/>
            <person name="Fosler C."/>
            <person name="Glodek A."/>
            <person name="Gu Z."/>
            <person name="Jennings D."/>
            <person name="Kraft C.L."/>
            <person name="Nguyen T."/>
            <person name="Pfannkoch C.M."/>
            <person name="Sitter C."/>
            <person name="Sutton G.G."/>
            <person name="Venter J.C."/>
            <person name="Woodage T."/>
            <person name="Smith D."/>
            <person name="Lee H.-M."/>
            <person name="Gustafson E."/>
            <person name="Cahill P."/>
            <person name="Kana A."/>
            <person name="Doucette-Stamm L."/>
            <person name="Weinstock K."/>
            <person name="Fechtel K."/>
            <person name="Weiss R.B."/>
            <person name="Dunn D.M."/>
            <person name="Green E.D."/>
            <person name="Blakesley R.W."/>
            <person name="Bouffard G.G."/>
            <person name="De Jong P.J."/>
            <person name="Osoegawa K."/>
            <person name="Zhu B."/>
            <person name="Marra M."/>
            <person name="Schein J."/>
            <person name="Bosdet I."/>
            <person name="Fjell C."/>
            <person name="Jones S."/>
            <person name="Krzywinski M."/>
            <person name="Mathewson C."/>
            <person name="Siddiqui A."/>
            <person name="Wye N."/>
            <person name="McPherson J."/>
            <person name="Zhao S."/>
            <person name="Fraser C.M."/>
            <person name="Shetty J."/>
            <person name="Shatsman S."/>
            <person name="Geer K."/>
            <person name="Chen Y."/>
            <person name="Abramzon S."/>
            <person name="Nierman W.C."/>
            <person name="Havlak P.H."/>
            <person name="Chen R."/>
            <person name="Durbin K.J."/>
            <person name="Egan A."/>
            <person name="Ren Y."/>
            <person name="Song X.-Z."/>
            <person name="Li B."/>
            <person name="Liu Y."/>
            <person name="Qin X."/>
            <person name="Cawley S."/>
            <person name="Cooney A.J."/>
            <person name="D'Souza L.M."/>
            <person name="Martin K."/>
            <person name="Wu J.Q."/>
            <person name="Gonzalez-Garay M.L."/>
            <person name="Jackson A.R."/>
            <person name="Kalafus K.J."/>
            <person name="McLeod M.P."/>
            <person name="Milosavljevic A."/>
            <person name="Virk D."/>
            <person name="Volkov A."/>
            <person name="Wheeler D.A."/>
            <person name="Zhang Z."/>
            <person name="Bailey J.A."/>
            <person name="Eichler E.E."/>
            <person name="Tuzun E."/>
            <person name="Birney E."/>
            <person name="Mongin E."/>
            <person name="Ureta-Vidal A."/>
            <person name="Woodwark C."/>
            <person name="Zdobnov E."/>
            <person name="Bork P."/>
            <person name="Suyama M."/>
            <person name="Torrents D."/>
            <person name="Alexandersson M."/>
            <person name="Trask B.J."/>
            <person name="Young J.M."/>
            <person name="Huang H."/>
            <person name="Wang H."/>
            <person name="Xing H."/>
            <person name="Daniels S."/>
            <person name="Gietzen D."/>
            <person name="Schmidt J."/>
            <person name="Stevens K."/>
            <person name="Vitt U."/>
            <person name="Wingrove J."/>
            <person name="Camara F."/>
            <person name="Mar Alba M."/>
            <person name="Abril J.F."/>
            <person name="Guigo R."/>
            <person name="Smit A."/>
            <person name="Dubchak I."/>
            <person name="Rubin E.M."/>
            <person name="Couronne O."/>
            <person name="Poliakov A."/>
            <person name="Huebner N."/>
            <person name="Ganten D."/>
            <person name="Goesele C."/>
            <person name="Hummel O."/>
            <person name="Kreitler T."/>
            <person name="Lee Y.-A."/>
            <person name="Monti J."/>
            <person name="Schulz H."/>
            <person name="Zimdahl H."/>
            <person name="Himmelbauer H."/>
            <person name="Lehrach H."/>
            <person name="Jacob H.J."/>
            <person name="Bromberg S."/>
            <person name="Gullings-Handley J."/>
            <person name="Jensen-Seaman M.I."/>
            <person name="Kwitek A.E."/>
            <person name="Lazar J."/>
            <person name="Pasko D."/>
            <person name="Tonellato P.J."/>
            <person name="Twigger S."/>
            <person name="Ponting C.P."/>
            <person name="Duarte J.M."/>
            <person name="Rice S."/>
            <person name="Goodstadt L."/>
            <person name="Beatson S.A."/>
            <person name="Emes R.D."/>
            <person name="Winter E.E."/>
            <person name="Webber C."/>
            <person name="Brandt P."/>
            <person name="Nyakatura G."/>
            <person name="Adetobi M."/>
            <person name="Chiaromonte F."/>
            <person name="Elnitski L."/>
            <person name="Eswara P."/>
            <person name="Hardison R.C."/>
            <person name="Hou M."/>
            <person name="Kolbe D."/>
            <person name="Makova K."/>
            <person name="Miller W."/>
            <person name="Nekrutenko A."/>
            <person name="Riemer C."/>
            <person name="Schwartz S."/>
            <person name="Taylor J."/>
            <person name="Yang S."/>
            <person name="Zhang Y."/>
            <person name="Lindpaintner K."/>
            <person name="Andrews T.D."/>
            <person name="Caccamo M."/>
            <person name="Clamp M."/>
            <person name="Clarke L."/>
            <person name="Curwen V."/>
            <person name="Durbin R.M."/>
            <person name="Eyras E."/>
            <person name="Searle S.M."/>
            <person name="Cooper G.M."/>
            <person name="Batzoglou S."/>
            <person name="Brudno M."/>
            <person name="Sidow A."/>
            <person name="Stone E.A."/>
            <person name="Payseur B.A."/>
            <person name="Bourque G."/>
            <person name="Lopez-Otin C."/>
            <person name="Puente X.S."/>
            <person name="Chakrabarti K."/>
            <person name="Chatterji S."/>
            <person name="Dewey C."/>
            <person name="Pachter L."/>
            <person name="Bray N."/>
            <person name="Yap V.B."/>
            <person name="Caspi A."/>
            <person name="Tesler G."/>
            <person name="Pevzner P.A."/>
            <person name="Haussler D."/>
            <person name="Roskin K.M."/>
            <person name="Baertsch R."/>
            <person name="Clawson H."/>
            <person name="Furey T.S."/>
            <person name="Hinrichs A.S."/>
            <person name="Karolchik D."/>
            <person name="Kent W.J."/>
            <person name="Rosenbloom K.R."/>
            <person name="Trumbower H."/>
            <person name="Weirauch M."/>
            <person name="Cooper D.N."/>
            <person name="Stenson P.D."/>
            <person name="Ma B."/>
            <person name="Brent M."/>
            <person name="Arumugam M."/>
            <person name="Shteynberg D."/>
            <person name="Copley R.R."/>
            <person name="Taylor M.S."/>
            <person name="Riethman H."/>
            <person name="Mudunuri U."/>
            <person name="Peterson J."/>
            <person name="Guyer M."/>
            <person name="Felsenfeld A."/>
            <person name="Old S."/>
            <person name="Mockrin S."/>
            <person name="Collins F.S."/>
        </authorList>
    </citation>
    <scope>NUCLEOTIDE SEQUENCE [LARGE SCALE GENOMIC DNA]</scope>
    <source>
        <strain>Brown Norway</strain>
    </source>
</reference>
<reference key="2">
    <citation type="journal article" date="2014" name="Biol. Reprod.">
        <title>Forty-four novel protein-coding loci discovered using a proteomics informed by transcriptomics (PIT) approach in rat male germ cells.</title>
        <authorList>
            <person name="Chocu S."/>
            <person name="Evrard B."/>
            <person name="Lavigne R."/>
            <person name="Rolland A.D."/>
            <person name="Aubry F."/>
            <person name="Jegou B."/>
            <person name="Chalmel F."/>
            <person name="Pineau C."/>
        </authorList>
    </citation>
    <scope>IDENTIFICATION</scope>
    <scope>TISSUE SPECIFICITY</scope>
</reference>
<proteinExistence type="evidence at protein level"/>
<organism>
    <name type="scientific">Rattus norvegicus</name>
    <name type="common">Rat</name>
    <dbReference type="NCBI Taxonomy" id="10116"/>
    <lineage>
        <taxon>Eukaryota</taxon>
        <taxon>Metazoa</taxon>
        <taxon>Chordata</taxon>
        <taxon>Craniata</taxon>
        <taxon>Vertebrata</taxon>
        <taxon>Euteleostomi</taxon>
        <taxon>Mammalia</taxon>
        <taxon>Eutheria</taxon>
        <taxon>Euarchontoglires</taxon>
        <taxon>Glires</taxon>
        <taxon>Rodentia</taxon>
        <taxon>Myomorpha</taxon>
        <taxon>Muroidea</taxon>
        <taxon>Muridae</taxon>
        <taxon>Murinae</taxon>
        <taxon>Rattus</taxon>
    </lineage>
</organism>
<name>ENOL_RAT</name>
<dbReference type="EMBL" id="AABR07005779">
    <property type="status" value="NOT_ANNOTATED_CDS"/>
    <property type="molecule type" value="Genomic_DNA"/>
</dbReference>
<dbReference type="FunCoup" id="P0DO93">
    <property type="interactions" value="5"/>
</dbReference>
<dbReference type="AGR" id="RGD:7676737"/>
<dbReference type="RGD" id="7676737">
    <property type="gene designation" value="LOC102552638"/>
</dbReference>
<dbReference type="InParanoid" id="P0DO93"/>
<dbReference type="PRO" id="PR:P0DO93"/>
<dbReference type="Proteomes" id="UP000002494">
    <property type="component" value="Unplaced"/>
</dbReference>
<evidence type="ECO:0000256" key="1">
    <source>
        <dbReference type="SAM" id="MobiDB-lite"/>
    </source>
</evidence>
<evidence type="ECO:0000269" key="2">
    <source>
    </source>
</evidence>
<evidence type="ECO:0000303" key="3">
    <source>
    </source>
</evidence>
<evidence type="ECO:0000305" key="4">
    <source>
    </source>
</evidence>
<protein>
    <recommendedName>
        <fullName evidence="4">Putative protein T-ENOL</fullName>
    </recommendedName>
    <alternativeName>
        <fullName evidence="3">Testicular enolase domain-containing protein</fullName>
    </alternativeName>
</protein>
<sequence>MASTSARSGDKKDTWPIQAAASLGGGQKASLSRSEEFLTRISTELTDEALFTARSHMNPMPDKEKQTKDQGTQISRHVFFTKTRGTDTR</sequence>
<gene>
    <name evidence="3" type="primary">T-enol</name>
</gene>
<accession>P0DO93</accession>